<keyword id="KW-0056">Arginine metabolism</keyword>
<keyword id="KW-0520">NAD</keyword>
<keyword id="KW-0560">Oxidoreductase</keyword>
<name>ASTD_SALPK</name>
<feature type="chain" id="PRO_1000138059" description="N-succinylglutamate 5-semialdehyde dehydrogenase">
    <location>
        <begin position="1"/>
        <end position="492"/>
    </location>
</feature>
<feature type="active site" evidence="1">
    <location>
        <position position="243"/>
    </location>
</feature>
<feature type="active site" evidence="1">
    <location>
        <position position="277"/>
    </location>
</feature>
<feature type="binding site" evidence="1">
    <location>
        <begin position="220"/>
        <end position="225"/>
    </location>
    <ligand>
        <name>NAD(+)</name>
        <dbReference type="ChEBI" id="CHEBI:57540"/>
    </ligand>
</feature>
<accession>B5BA70</accession>
<comment type="function">
    <text evidence="1">Catalyzes the NAD-dependent reduction of succinylglutamate semialdehyde into succinylglutamate.</text>
</comment>
<comment type="catalytic activity">
    <reaction evidence="1">
        <text>N-succinyl-L-glutamate 5-semialdehyde + NAD(+) + H2O = N-succinyl-L-glutamate + NADH + 2 H(+)</text>
        <dbReference type="Rhea" id="RHEA:10812"/>
        <dbReference type="ChEBI" id="CHEBI:15377"/>
        <dbReference type="ChEBI" id="CHEBI:15378"/>
        <dbReference type="ChEBI" id="CHEBI:57540"/>
        <dbReference type="ChEBI" id="CHEBI:57945"/>
        <dbReference type="ChEBI" id="CHEBI:58520"/>
        <dbReference type="ChEBI" id="CHEBI:58763"/>
        <dbReference type="EC" id="1.2.1.71"/>
    </reaction>
</comment>
<comment type="pathway">
    <text evidence="1">Amino-acid degradation; L-arginine degradation via AST pathway; L-glutamate and succinate from L-arginine: step 4/5.</text>
</comment>
<comment type="similarity">
    <text evidence="1">Belongs to the aldehyde dehydrogenase family. AstD subfamily.</text>
</comment>
<dbReference type="EC" id="1.2.1.71" evidence="1"/>
<dbReference type="EMBL" id="FM200053">
    <property type="protein sequence ID" value="CAR59609.1"/>
    <property type="molecule type" value="Genomic_DNA"/>
</dbReference>
<dbReference type="RefSeq" id="WP_000177280.1">
    <property type="nucleotide sequence ID" value="NC_011147.1"/>
</dbReference>
<dbReference type="SMR" id="B5BA70"/>
<dbReference type="KEGG" id="sek:SSPA1430"/>
<dbReference type="HOGENOM" id="CLU_005391_1_0_6"/>
<dbReference type="UniPathway" id="UPA00185">
    <property type="reaction ID" value="UER00282"/>
</dbReference>
<dbReference type="Proteomes" id="UP000001869">
    <property type="component" value="Chromosome"/>
</dbReference>
<dbReference type="GO" id="GO:0043824">
    <property type="term" value="F:succinylglutamate-semialdehyde dehydrogenase activity"/>
    <property type="evidence" value="ECO:0007669"/>
    <property type="project" value="UniProtKB-EC"/>
</dbReference>
<dbReference type="GO" id="GO:0019544">
    <property type="term" value="P:arginine catabolic process to glutamate"/>
    <property type="evidence" value="ECO:0007669"/>
    <property type="project" value="UniProtKB-UniRule"/>
</dbReference>
<dbReference type="GO" id="GO:0019545">
    <property type="term" value="P:arginine catabolic process to succinate"/>
    <property type="evidence" value="ECO:0007669"/>
    <property type="project" value="UniProtKB-UniRule"/>
</dbReference>
<dbReference type="CDD" id="cd07095">
    <property type="entry name" value="ALDH_SGSD_AstD"/>
    <property type="match status" value="1"/>
</dbReference>
<dbReference type="FunFam" id="3.40.309.10:FF:000013">
    <property type="entry name" value="N-succinylglutamate 5-semialdehyde dehydrogenase"/>
    <property type="match status" value="1"/>
</dbReference>
<dbReference type="FunFam" id="3.40.605.10:FF:000010">
    <property type="entry name" value="N-succinylglutamate 5-semialdehyde dehydrogenase"/>
    <property type="match status" value="1"/>
</dbReference>
<dbReference type="Gene3D" id="3.40.605.10">
    <property type="entry name" value="Aldehyde Dehydrogenase, Chain A, domain 1"/>
    <property type="match status" value="1"/>
</dbReference>
<dbReference type="Gene3D" id="3.40.309.10">
    <property type="entry name" value="Aldehyde Dehydrogenase, Chain A, domain 2"/>
    <property type="match status" value="1"/>
</dbReference>
<dbReference type="HAMAP" id="MF_01174">
    <property type="entry name" value="Aldedh_AstD"/>
    <property type="match status" value="1"/>
</dbReference>
<dbReference type="InterPro" id="IPR016161">
    <property type="entry name" value="Ald_DH/histidinol_DH"/>
</dbReference>
<dbReference type="InterPro" id="IPR016163">
    <property type="entry name" value="Ald_DH_C"/>
</dbReference>
<dbReference type="InterPro" id="IPR016160">
    <property type="entry name" value="Ald_DH_CS_CYS"/>
</dbReference>
<dbReference type="InterPro" id="IPR029510">
    <property type="entry name" value="Ald_DH_CS_GLU"/>
</dbReference>
<dbReference type="InterPro" id="IPR016162">
    <property type="entry name" value="Ald_DH_N"/>
</dbReference>
<dbReference type="InterPro" id="IPR015590">
    <property type="entry name" value="Aldehyde_DH_dom"/>
</dbReference>
<dbReference type="InterPro" id="IPR017649">
    <property type="entry name" value="SuccinylGlu_semiald_DH_AstD"/>
</dbReference>
<dbReference type="NCBIfam" id="TIGR03240">
    <property type="entry name" value="arg_catab_astD"/>
    <property type="match status" value="1"/>
</dbReference>
<dbReference type="NCBIfam" id="NF006992">
    <property type="entry name" value="PRK09457.1"/>
    <property type="match status" value="1"/>
</dbReference>
<dbReference type="PANTHER" id="PTHR11699">
    <property type="entry name" value="ALDEHYDE DEHYDROGENASE-RELATED"/>
    <property type="match status" value="1"/>
</dbReference>
<dbReference type="Pfam" id="PF00171">
    <property type="entry name" value="Aldedh"/>
    <property type="match status" value="1"/>
</dbReference>
<dbReference type="SUPFAM" id="SSF53720">
    <property type="entry name" value="ALDH-like"/>
    <property type="match status" value="1"/>
</dbReference>
<dbReference type="PROSITE" id="PS00070">
    <property type="entry name" value="ALDEHYDE_DEHYDR_CYS"/>
    <property type="match status" value="1"/>
</dbReference>
<dbReference type="PROSITE" id="PS00687">
    <property type="entry name" value="ALDEHYDE_DEHYDR_GLU"/>
    <property type="match status" value="1"/>
</dbReference>
<protein>
    <recommendedName>
        <fullName evidence="1">N-succinylglutamate 5-semialdehyde dehydrogenase</fullName>
        <ecNumber evidence="1">1.2.1.71</ecNumber>
    </recommendedName>
    <alternativeName>
        <fullName evidence="1">Succinylglutamic semialdehyde dehydrogenase</fullName>
        <shortName evidence="1">SGSD</shortName>
    </alternativeName>
</protein>
<organism>
    <name type="scientific">Salmonella paratyphi A (strain AKU_12601)</name>
    <dbReference type="NCBI Taxonomy" id="554290"/>
    <lineage>
        <taxon>Bacteria</taxon>
        <taxon>Pseudomonadati</taxon>
        <taxon>Pseudomonadota</taxon>
        <taxon>Gammaproteobacteria</taxon>
        <taxon>Enterobacterales</taxon>
        <taxon>Enterobacteriaceae</taxon>
        <taxon>Salmonella</taxon>
    </lineage>
</organism>
<sequence>MTLWINGDWITGQGERRRKTNPVSAEILWQGNDANAAQVAEACQAARAAFPRWARQPFTARQAIVQKFAALLEAHKADLTEVIARETGKPRWEAATEVTAMINKIAISIKAYHARTGEQKSELVDGAATLRHRPHGVLAVFGPYNFPGHLPNGHIVSALLAGNTLIFKPSELTPWTGETVIKLWERAGLPAGVLNLVQGGRETGQALSSLDDLDGLLFTGSASTGYQLHRQLSGQPEKILALEMGGNNPLIIEDVANIDAAVHLTLQSAFITAGQRCTCARRLLVKQGAQVDAFLARLVDVAGRLQPGRWDDDPQSFIGGLISAQAAQHVMEAWRQREALGGRTLLASRKVKEGTSLLTPGIIELTGVADVPDEEVFGPLLNVWRYAHFDEAIRLANNTRFGLSCGLVSTDRAQFEQLLLEARAGIVNWNKPLTGAASTAPFGGVGASGNHRPSAWYAADYCAWPMASLESPELTLPATLSPGLDFSRREAV</sequence>
<reference key="1">
    <citation type="journal article" date="2009" name="BMC Genomics">
        <title>Pseudogene accumulation in the evolutionary histories of Salmonella enterica serovars Paratyphi A and Typhi.</title>
        <authorList>
            <person name="Holt K.E."/>
            <person name="Thomson N.R."/>
            <person name="Wain J."/>
            <person name="Langridge G.C."/>
            <person name="Hasan R."/>
            <person name="Bhutta Z.A."/>
            <person name="Quail M.A."/>
            <person name="Norbertczak H."/>
            <person name="Walker D."/>
            <person name="Simmonds M."/>
            <person name="White B."/>
            <person name="Bason N."/>
            <person name="Mungall K."/>
            <person name="Dougan G."/>
            <person name="Parkhill J."/>
        </authorList>
    </citation>
    <scope>NUCLEOTIDE SEQUENCE [LARGE SCALE GENOMIC DNA]</scope>
    <source>
        <strain>AKU_12601</strain>
    </source>
</reference>
<proteinExistence type="inferred from homology"/>
<gene>
    <name evidence="1" type="primary">astD</name>
    <name type="ordered locus">SSPA1430</name>
</gene>
<evidence type="ECO:0000255" key="1">
    <source>
        <dbReference type="HAMAP-Rule" id="MF_01174"/>
    </source>
</evidence>